<comment type="function">
    <text evidence="1">Necessary for efficient RNA polymerase transcription elongation past template-encoded arresting sites. The arresting sites in DNA have the property of trapping a certain fraction of elongating RNA polymerases that pass through, resulting in locked ternary complexes. Cleavage of the nascent transcript by cleavage factors such as GreA or GreB allows the resumption of elongation from the new 3'terminus. GreA releases sequences of 2 to 3 nucleotides.</text>
</comment>
<comment type="similarity">
    <text evidence="1">Belongs to the GreA/GreB family.</text>
</comment>
<protein>
    <recommendedName>
        <fullName evidence="1">Transcription elongation factor GreA</fullName>
    </recommendedName>
    <alternativeName>
        <fullName evidence="1">Transcript cleavage factor GreA</fullName>
    </alternativeName>
</protein>
<evidence type="ECO:0000255" key="1">
    <source>
        <dbReference type="HAMAP-Rule" id="MF_00105"/>
    </source>
</evidence>
<name>GREA_BACCZ</name>
<dbReference type="EMBL" id="CP000001">
    <property type="protein sequence ID" value="AAU16146.1"/>
    <property type="molecule type" value="Genomic_DNA"/>
</dbReference>
<dbReference type="RefSeq" id="WP_000179966.1">
    <property type="nucleotide sequence ID" value="NZ_CP009968.1"/>
</dbReference>
<dbReference type="SMR" id="Q634G5"/>
<dbReference type="GeneID" id="93006722"/>
<dbReference type="KEGG" id="bcz:BCE33L4123"/>
<dbReference type="PATRIC" id="fig|288681.22.peg.1261"/>
<dbReference type="Proteomes" id="UP000002612">
    <property type="component" value="Chromosome"/>
</dbReference>
<dbReference type="GO" id="GO:0003677">
    <property type="term" value="F:DNA binding"/>
    <property type="evidence" value="ECO:0007669"/>
    <property type="project" value="UniProtKB-UniRule"/>
</dbReference>
<dbReference type="GO" id="GO:0070063">
    <property type="term" value="F:RNA polymerase binding"/>
    <property type="evidence" value="ECO:0007669"/>
    <property type="project" value="InterPro"/>
</dbReference>
<dbReference type="GO" id="GO:0006354">
    <property type="term" value="P:DNA-templated transcription elongation"/>
    <property type="evidence" value="ECO:0007669"/>
    <property type="project" value="TreeGrafter"/>
</dbReference>
<dbReference type="GO" id="GO:0032784">
    <property type="term" value="P:regulation of DNA-templated transcription elongation"/>
    <property type="evidence" value="ECO:0007669"/>
    <property type="project" value="UniProtKB-UniRule"/>
</dbReference>
<dbReference type="FunFam" id="1.10.287.180:FF:000001">
    <property type="entry name" value="Transcription elongation factor GreA"/>
    <property type="match status" value="1"/>
</dbReference>
<dbReference type="FunFam" id="3.10.50.30:FF:000001">
    <property type="entry name" value="Transcription elongation factor GreA"/>
    <property type="match status" value="1"/>
</dbReference>
<dbReference type="Gene3D" id="3.10.50.30">
    <property type="entry name" value="Transcription elongation factor, GreA/GreB, C-terminal domain"/>
    <property type="match status" value="1"/>
</dbReference>
<dbReference type="Gene3D" id="1.10.287.180">
    <property type="entry name" value="Transcription elongation factor, GreA/GreB, N-terminal domain"/>
    <property type="match status" value="1"/>
</dbReference>
<dbReference type="HAMAP" id="MF_00105">
    <property type="entry name" value="GreA_GreB"/>
    <property type="match status" value="1"/>
</dbReference>
<dbReference type="InterPro" id="IPR036953">
    <property type="entry name" value="GreA/GreB_C_sf"/>
</dbReference>
<dbReference type="InterPro" id="IPR018151">
    <property type="entry name" value="TF_GreA/GreB_CS"/>
</dbReference>
<dbReference type="InterPro" id="IPR006359">
    <property type="entry name" value="Tscrpt_elong_fac_GreA"/>
</dbReference>
<dbReference type="InterPro" id="IPR028624">
    <property type="entry name" value="Tscrpt_elong_fac_GreA/B"/>
</dbReference>
<dbReference type="InterPro" id="IPR001437">
    <property type="entry name" value="Tscrpt_elong_fac_GreA/B_C"/>
</dbReference>
<dbReference type="InterPro" id="IPR023459">
    <property type="entry name" value="Tscrpt_elong_fac_GreA/B_fam"/>
</dbReference>
<dbReference type="InterPro" id="IPR022691">
    <property type="entry name" value="Tscrpt_elong_fac_GreA/B_N"/>
</dbReference>
<dbReference type="InterPro" id="IPR036805">
    <property type="entry name" value="Tscrpt_elong_fac_GreA/B_N_sf"/>
</dbReference>
<dbReference type="NCBIfam" id="TIGR01462">
    <property type="entry name" value="greA"/>
    <property type="match status" value="1"/>
</dbReference>
<dbReference type="NCBIfam" id="NF001261">
    <property type="entry name" value="PRK00226.1-2"/>
    <property type="match status" value="1"/>
</dbReference>
<dbReference type="NCBIfam" id="NF001263">
    <property type="entry name" value="PRK00226.1-4"/>
    <property type="match status" value="1"/>
</dbReference>
<dbReference type="PANTHER" id="PTHR30437">
    <property type="entry name" value="TRANSCRIPTION ELONGATION FACTOR GREA"/>
    <property type="match status" value="1"/>
</dbReference>
<dbReference type="PANTHER" id="PTHR30437:SF4">
    <property type="entry name" value="TRANSCRIPTION ELONGATION FACTOR GREA"/>
    <property type="match status" value="1"/>
</dbReference>
<dbReference type="Pfam" id="PF01272">
    <property type="entry name" value="GreA_GreB"/>
    <property type="match status" value="1"/>
</dbReference>
<dbReference type="Pfam" id="PF03449">
    <property type="entry name" value="GreA_GreB_N"/>
    <property type="match status" value="1"/>
</dbReference>
<dbReference type="PIRSF" id="PIRSF006092">
    <property type="entry name" value="GreA_GreB"/>
    <property type="match status" value="1"/>
</dbReference>
<dbReference type="SUPFAM" id="SSF54534">
    <property type="entry name" value="FKBP-like"/>
    <property type="match status" value="1"/>
</dbReference>
<dbReference type="SUPFAM" id="SSF46557">
    <property type="entry name" value="GreA transcript cleavage protein, N-terminal domain"/>
    <property type="match status" value="1"/>
</dbReference>
<dbReference type="PROSITE" id="PS00829">
    <property type="entry name" value="GREAB_1"/>
    <property type="match status" value="1"/>
</dbReference>
<dbReference type="PROSITE" id="PS00830">
    <property type="entry name" value="GREAB_2"/>
    <property type="match status" value="1"/>
</dbReference>
<keyword id="KW-0175">Coiled coil</keyword>
<keyword id="KW-0238">DNA-binding</keyword>
<keyword id="KW-0804">Transcription</keyword>
<keyword id="KW-0805">Transcription regulation</keyword>
<organism>
    <name type="scientific">Bacillus cereus (strain ZK / E33L)</name>
    <dbReference type="NCBI Taxonomy" id="288681"/>
    <lineage>
        <taxon>Bacteria</taxon>
        <taxon>Bacillati</taxon>
        <taxon>Bacillota</taxon>
        <taxon>Bacilli</taxon>
        <taxon>Bacillales</taxon>
        <taxon>Bacillaceae</taxon>
        <taxon>Bacillus</taxon>
        <taxon>Bacillus cereus group</taxon>
    </lineage>
</organism>
<sequence>MATEKTYPMTQEGKQKLENELEDLKTVKRKEVVERIKIARSFGDLSENSEYDAAKDEQAFVEGRITQLENMIRNAVIITDNGEESTVVTLGKTVTFKELPNGDEEAYTIVGSAEADPFEGRISNDSPIAKSLLGKQIGEKVAIQTPGGEMQVEIISVK</sequence>
<gene>
    <name evidence="1" type="primary">greA</name>
    <name type="ordered locus">BCE33L4123</name>
</gene>
<reference key="1">
    <citation type="journal article" date="2006" name="J. Bacteriol.">
        <title>Pathogenomic sequence analysis of Bacillus cereus and Bacillus thuringiensis isolates closely related to Bacillus anthracis.</title>
        <authorList>
            <person name="Han C.S."/>
            <person name="Xie G."/>
            <person name="Challacombe J.F."/>
            <person name="Altherr M.R."/>
            <person name="Bhotika S.S."/>
            <person name="Bruce D."/>
            <person name="Campbell C.S."/>
            <person name="Campbell M.L."/>
            <person name="Chen J."/>
            <person name="Chertkov O."/>
            <person name="Cleland C."/>
            <person name="Dimitrijevic M."/>
            <person name="Doggett N.A."/>
            <person name="Fawcett J.J."/>
            <person name="Glavina T."/>
            <person name="Goodwin L.A."/>
            <person name="Hill K.K."/>
            <person name="Hitchcock P."/>
            <person name="Jackson P.J."/>
            <person name="Keim P."/>
            <person name="Kewalramani A.R."/>
            <person name="Longmire J."/>
            <person name="Lucas S."/>
            <person name="Malfatti S."/>
            <person name="McMurry K."/>
            <person name="Meincke L.J."/>
            <person name="Misra M."/>
            <person name="Moseman B.L."/>
            <person name="Mundt M."/>
            <person name="Munk A.C."/>
            <person name="Okinaka R.T."/>
            <person name="Parson-Quintana B."/>
            <person name="Reilly L.P."/>
            <person name="Richardson P."/>
            <person name="Robinson D.L."/>
            <person name="Rubin E."/>
            <person name="Saunders E."/>
            <person name="Tapia R."/>
            <person name="Tesmer J.G."/>
            <person name="Thayer N."/>
            <person name="Thompson L.S."/>
            <person name="Tice H."/>
            <person name="Ticknor L.O."/>
            <person name="Wills P.L."/>
            <person name="Brettin T.S."/>
            <person name="Gilna P."/>
        </authorList>
    </citation>
    <scope>NUCLEOTIDE SEQUENCE [LARGE SCALE GENOMIC DNA]</scope>
    <source>
        <strain>ZK / E33L</strain>
    </source>
</reference>
<proteinExistence type="inferred from homology"/>
<feature type="chain" id="PRO_1000034247" description="Transcription elongation factor GreA">
    <location>
        <begin position="1"/>
        <end position="158"/>
    </location>
</feature>
<feature type="coiled-coil region" evidence="1">
    <location>
        <begin position="4"/>
        <end position="75"/>
    </location>
</feature>
<accession>Q634G5</accession>